<proteinExistence type="inferred from homology"/>
<protein>
    <recommendedName>
        <fullName evidence="1">Small ribosomal subunit protein uS14</fullName>
    </recommendedName>
    <alternativeName>
        <fullName evidence="2">30S ribosomal protein S14</fullName>
    </alternativeName>
</protein>
<organism>
    <name type="scientific">Wolbachia pipientis wMel</name>
    <dbReference type="NCBI Taxonomy" id="163164"/>
    <lineage>
        <taxon>Bacteria</taxon>
        <taxon>Pseudomonadati</taxon>
        <taxon>Pseudomonadota</taxon>
        <taxon>Alphaproteobacteria</taxon>
        <taxon>Rickettsiales</taxon>
        <taxon>Anaplasmataceae</taxon>
        <taxon>Wolbachieae</taxon>
        <taxon>Wolbachia</taxon>
    </lineage>
</organism>
<evidence type="ECO:0000255" key="1">
    <source>
        <dbReference type="HAMAP-Rule" id="MF_00537"/>
    </source>
</evidence>
<evidence type="ECO:0000305" key="2"/>
<accession>Q73H99</accession>
<sequence>MAKKSMIERNLRRIKLCDQYKEKREKLKSIINNKNLSIVERFTAQNKLIKKLPRNSSKTKIRNRCALTGRPRGVYRKFGLCRIVLRDLCSFGQIPGVTKSSW</sequence>
<feature type="chain" id="PRO_0000269075" description="Small ribosomal subunit protein uS14">
    <location>
        <begin position="1"/>
        <end position="102"/>
    </location>
</feature>
<reference key="1">
    <citation type="journal article" date="2004" name="PLoS Biol.">
        <title>Phylogenomics of the reproductive parasite Wolbachia pipientis wMel: a streamlined genome overrun by mobile genetic elements.</title>
        <authorList>
            <person name="Wu M."/>
            <person name="Sun L.V."/>
            <person name="Vamathevan J.J."/>
            <person name="Riegler M."/>
            <person name="DeBoy R.T."/>
            <person name="Brownlie J.C."/>
            <person name="McGraw E.A."/>
            <person name="Martin W."/>
            <person name="Esser C."/>
            <person name="Ahmadinejad N."/>
            <person name="Wiegand C."/>
            <person name="Madupu R."/>
            <person name="Beanan M.J."/>
            <person name="Brinkac L.M."/>
            <person name="Daugherty S.C."/>
            <person name="Durkin A.S."/>
            <person name="Kolonay J.F."/>
            <person name="Nelson W.C."/>
            <person name="Mohamoud Y."/>
            <person name="Lee P."/>
            <person name="Berry K.J."/>
            <person name="Young M.B."/>
            <person name="Utterback T.R."/>
            <person name="Weidman J.F."/>
            <person name="Nierman W.C."/>
            <person name="Paulsen I.T."/>
            <person name="Nelson K.E."/>
            <person name="Tettelin H."/>
            <person name="O'Neill S.L."/>
            <person name="Eisen J.A."/>
        </authorList>
    </citation>
    <scope>NUCLEOTIDE SEQUENCE [LARGE SCALE GENOMIC DNA]</scope>
</reference>
<gene>
    <name evidence="1" type="primary">rpsN</name>
    <name type="ordered locus">WD_0668</name>
</gene>
<name>RS14_WOLPM</name>
<keyword id="KW-0687">Ribonucleoprotein</keyword>
<keyword id="KW-0689">Ribosomal protein</keyword>
<keyword id="KW-0694">RNA-binding</keyword>
<keyword id="KW-0699">rRNA-binding</keyword>
<dbReference type="EMBL" id="AE017196">
    <property type="protein sequence ID" value="AAS14366.1"/>
    <property type="molecule type" value="Genomic_DNA"/>
</dbReference>
<dbReference type="RefSeq" id="WP_006279345.1">
    <property type="nucleotide sequence ID" value="NZ_OX384529.1"/>
</dbReference>
<dbReference type="SMR" id="Q73H99"/>
<dbReference type="EnsemblBacteria" id="AAS14366">
    <property type="protein sequence ID" value="AAS14366"/>
    <property type="gene ID" value="WD_0668"/>
</dbReference>
<dbReference type="GeneID" id="70036151"/>
<dbReference type="KEGG" id="wol:WD_0668"/>
<dbReference type="eggNOG" id="COG0199">
    <property type="taxonomic scope" value="Bacteria"/>
</dbReference>
<dbReference type="Proteomes" id="UP000008215">
    <property type="component" value="Chromosome"/>
</dbReference>
<dbReference type="GO" id="GO:0005737">
    <property type="term" value="C:cytoplasm"/>
    <property type="evidence" value="ECO:0007669"/>
    <property type="project" value="UniProtKB-ARBA"/>
</dbReference>
<dbReference type="GO" id="GO:0015935">
    <property type="term" value="C:small ribosomal subunit"/>
    <property type="evidence" value="ECO:0007669"/>
    <property type="project" value="TreeGrafter"/>
</dbReference>
<dbReference type="GO" id="GO:0019843">
    <property type="term" value="F:rRNA binding"/>
    <property type="evidence" value="ECO:0007669"/>
    <property type="project" value="UniProtKB-UniRule"/>
</dbReference>
<dbReference type="GO" id="GO:0003735">
    <property type="term" value="F:structural constituent of ribosome"/>
    <property type="evidence" value="ECO:0007669"/>
    <property type="project" value="InterPro"/>
</dbReference>
<dbReference type="GO" id="GO:0006412">
    <property type="term" value="P:translation"/>
    <property type="evidence" value="ECO:0007669"/>
    <property type="project" value="UniProtKB-UniRule"/>
</dbReference>
<dbReference type="FunFam" id="1.10.287.1480:FF:000001">
    <property type="entry name" value="30S ribosomal protein S14"/>
    <property type="match status" value="1"/>
</dbReference>
<dbReference type="Gene3D" id="1.10.287.1480">
    <property type="match status" value="1"/>
</dbReference>
<dbReference type="HAMAP" id="MF_00537">
    <property type="entry name" value="Ribosomal_uS14_1"/>
    <property type="match status" value="1"/>
</dbReference>
<dbReference type="InterPro" id="IPR001209">
    <property type="entry name" value="Ribosomal_uS14"/>
</dbReference>
<dbReference type="InterPro" id="IPR023036">
    <property type="entry name" value="Ribosomal_uS14_bac/plastid"/>
</dbReference>
<dbReference type="InterPro" id="IPR018271">
    <property type="entry name" value="Ribosomal_uS14_CS"/>
</dbReference>
<dbReference type="NCBIfam" id="NF006477">
    <property type="entry name" value="PRK08881.1"/>
    <property type="match status" value="1"/>
</dbReference>
<dbReference type="PANTHER" id="PTHR19836">
    <property type="entry name" value="30S RIBOSOMAL PROTEIN S14"/>
    <property type="match status" value="1"/>
</dbReference>
<dbReference type="PANTHER" id="PTHR19836:SF19">
    <property type="entry name" value="SMALL RIBOSOMAL SUBUNIT PROTEIN US14M"/>
    <property type="match status" value="1"/>
</dbReference>
<dbReference type="Pfam" id="PF00253">
    <property type="entry name" value="Ribosomal_S14"/>
    <property type="match status" value="1"/>
</dbReference>
<dbReference type="SUPFAM" id="SSF57716">
    <property type="entry name" value="Glucocorticoid receptor-like (DNA-binding domain)"/>
    <property type="match status" value="1"/>
</dbReference>
<dbReference type="PROSITE" id="PS00527">
    <property type="entry name" value="RIBOSOMAL_S14"/>
    <property type="match status" value="1"/>
</dbReference>
<comment type="function">
    <text evidence="1">Binds 16S rRNA, required for the assembly of 30S particles and may also be responsible for determining the conformation of the 16S rRNA at the A site.</text>
</comment>
<comment type="subunit">
    <text evidence="1">Part of the 30S ribosomal subunit. Contacts proteins S3 and S10.</text>
</comment>
<comment type="similarity">
    <text evidence="1">Belongs to the universal ribosomal protein uS14 family.</text>
</comment>